<name>HTPG_VIBC3</name>
<feature type="chain" id="PRO_1000072456" description="Chaperone protein HtpG">
    <location>
        <begin position="1"/>
        <end position="635"/>
    </location>
</feature>
<feature type="region of interest" description="A; substrate-binding" evidence="1">
    <location>
        <begin position="1"/>
        <end position="344"/>
    </location>
</feature>
<feature type="region of interest" description="B" evidence="1">
    <location>
        <begin position="345"/>
        <end position="561"/>
    </location>
</feature>
<feature type="region of interest" description="C" evidence="1">
    <location>
        <begin position="562"/>
        <end position="635"/>
    </location>
</feature>
<sequence>MSETATTNKETRGFQSEVKQLLHLMIHSLYSNKEIFLRELISNASDAVDKLRFQALSHPDLYQGDAELGVKLSFDKDKNTLTISDNGIGMTRDEVIENLGTIAKSGTAEFFSKLSQEQSKNSQLIGQFGVGFYSAFIVADAVTVRTRAAGSAPADAVQWYSKGEGEYTVETINKESRGTDIILHLREEGKEFLSEWRLRDVISKYSDHIGIPVYIQTSVMDEEGKATEETKWEQINKAQALWTRAKSEVTDEEYKEFYKHVSHDFADPLVWSHNKVEGKNDYTSLLYIPAKAPWDLFNREHKHGLKLYVQRVFIMDDAAQFMPSYLRFVRGLIDSNDLPLNVSREILQDNKITQSLRQACTKRVLTMLERMASNDADNYQKFWKEFGLVMKEGPAEDFANREKIASLLRFASTHIDSAEQTISLASYVERMKEGQDKIYYLTADSYTAAKNSPHLEQFKSKGIEVILMFDRIDEWLMNYLPEFEGKAFQSITKAGLDLSQFEDEAEKEKHKETEEQFKSVVERLKGYLGSRVKEVRTTFKLANTPAVVVTDDYEMGTQMAKLLAAAGQPVPEVKYILEVNPEHALVKRMADEADEQTFGRWAEVLLGQAMLAERGSMEDPSQFLGAVNQLLAPSH</sequence>
<dbReference type="EMBL" id="CP000627">
    <property type="protein sequence ID" value="ABQ21247.1"/>
    <property type="molecule type" value="Genomic_DNA"/>
</dbReference>
<dbReference type="EMBL" id="CP001235">
    <property type="protein sequence ID" value="ACP09012.1"/>
    <property type="molecule type" value="Genomic_DNA"/>
</dbReference>
<dbReference type="RefSeq" id="WP_001889892.1">
    <property type="nucleotide sequence ID" value="NZ_JAACZH010000005.1"/>
</dbReference>
<dbReference type="SMR" id="A5F2T9"/>
<dbReference type="KEGG" id="vco:VC0395_A0506"/>
<dbReference type="KEGG" id="vcr:VC395_1000"/>
<dbReference type="PATRIC" id="fig|345073.21.peg.969"/>
<dbReference type="eggNOG" id="COG0326">
    <property type="taxonomic scope" value="Bacteria"/>
</dbReference>
<dbReference type="HOGENOM" id="CLU_006684_3_0_6"/>
<dbReference type="OrthoDB" id="9802640at2"/>
<dbReference type="Proteomes" id="UP000000249">
    <property type="component" value="Chromosome 2"/>
</dbReference>
<dbReference type="GO" id="GO:0005737">
    <property type="term" value="C:cytoplasm"/>
    <property type="evidence" value="ECO:0007669"/>
    <property type="project" value="UniProtKB-SubCell"/>
</dbReference>
<dbReference type="GO" id="GO:0005524">
    <property type="term" value="F:ATP binding"/>
    <property type="evidence" value="ECO:0007669"/>
    <property type="project" value="UniProtKB-UniRule"/>
</dbReference>
<dbReference type="GO" id="GO:0016887">
    <property type="term" value="F:ATP hydrolysis activity"/>
    <property type="evidence" value="ECO:0007669"/>
    <property type="project" value="InterPro"/>
</dbReference>
<dbReference type="GO" id="GO:0140662">
    <property type="term" value="F:ATP-dependent protein folding chaperone"/>
    <property type="evidence" value="ECO:0007669"/>
    <property type="project" value="InterPro"/>
</dbReference>
<dbReference type="GO" id="GO:0051082">
    <property type="term" value="F:unfolded protein binding"/>
    <property type="evidence" value="ECO:0007669"/>
    <property type="project" value="UniProtKB-UniRule"/>
</dbReference>
<dbReference type="CDD" id="cd16927">
    <property type="entry name" value="HATPase_Hsp90-like"/>
    <property type="match status" value="1"/>
</dbReference>
<dbReference type="FunFam" id="1.20.120.790:FF:000002">
    <property type="entry name" value="Molecular chaperone HtpG"/>
    <property type="match status" value="1"/>
</dbReference>
<dbReference type="FunFam" id="3.30.230.80:FF:000002">
    <property type="entry name" value="Molecular chaperone HtpG"/>
    <property type="match status" value="1"/>
</dbReference>
<dbReference type="FunFam" id="3.30.565.10:FF:000009">
    <property type="entry name" value="Molecular chaperone HtpG"/>
    <property type="match status" value="1"/>
</dbReference>
<dbReference type="FunFam" id="3.40.50.11260:FF:000002">
    <property type="entry name" value="Molecular chaperone HtpG"/>
    <property type="match status" value="1"/>
</dbReference>
<dbReference type="Gene3D" id="3.30.230.80">
    <property type="match status" value="1"/>
</dbReference>
<dbReference type="Gene3D" id="3.40.50.11260">
    <property type="match status" value="1"/>
</dbReference>
<dbReference type="Gene3D" id="1.20.120.790">
    <property type="entry name" value="Heat shock protein 90, C-terminal domain"/>
    <property type="match status" value="1"/>
</dbReference>
<dbReference type="Gene3D" id="3.30.565.10">
    <property type="entry name" value="Histidine kinase-like ATPase, C-terminal domain"/>
    <property type="match status" value="1"/>
</dbReference>
<dbReference type="HAMAP" id="MF_00505">
    <property type="entry name" value="HSP90"/>
    <property type="match status" value="1"/>
</dbReference>
<dbReference type="InterPro" id="IPR036890">
    <property type="entry name" value="HATPase_C_sf"/>
</dbReference>
<dbReference type="InterPro" id="IPR019805">
    <property type="entry name" value="Heat_shock_protein_90_CS"/>
</dbReference>
<dbReference type="InterPro" id="IPR037196">
    <property type="entry name" value="HSP90_C"/>
</dbReference>
<dbReference type="InterPro" id="IPR001404">
    <property type="entry name" value="Hsp90_fam"/>
</dbReference>
<dbReference type="InterPro" id="IPR020575">
    <property type="entry name" value="Hsp90_N"/>
</dbReference>
<dbReference type="InterPro" id="IPR020568">
    <property type="entry name" value="Ribosomal_Su5_D2-typ_SF"/>
</dbReference>
<dbReference type="NCBIfam" id="NF003555">
    <property type="entry name" value="PRK05218.1"/>
    <property type="match status" value="1"/>
</dbReference>
<dbReference type="PANTHER" id="PTHR11528">
    <property type="entry name" value="HEAT SHOCK PROTEIN 90 FAMILY MEMBER"/>
    <property type="match status" value="1"/>
</dbReference>
<dbReference type="Pfam" id="PF13589">
    <property type="entry name" value="HATPase_c_3"/>
    <property type="match status" value="1"/>
</dbReference>
<dbReference type="Pfam" id="PF00183">
    <property type="entry name" value="HSP90"/>
    <property type="match status" value="1"/>
</dbReference>
<dbReference type="PIRSF" id="PIRSF002583">
    <property type="entry name" value="Hsp90"/>
    <property type="match status" value="1"/>
</dbReference>
<dbReference type="PRINTS" id="PR00775">
    <property type="entry name" value="HEATSHOCK90"/>
</dbReference>
<dbReference type="SMART" id="SM00387">
    <property type="entry name" value="HATPase_c"/>
    <property type="match status" value="1"/>
</dbReference>
<dbReference type="SUPFAM" id="SSF55874">
    <property type="entry name" value="ATPase domain of HSP90 chaperone/DNA topoisomerase II/histidine kinase"/>
    <property type="match status" value="1"/>
</dbReference>
<dbReference type="SUPFAM" id="SSF110942">
    <property type="entry name" value="HSP90 C-terminal domain"/>
    <property type="match status" value="1"/>
</dbReference>
<dbReference type="SUPFAM" id="SSF54211">
    <property type="entry name" value="Ribosomal protein S5 domain 2-like"/>
    <property type="match status" value="1"/>
</dbReference>
<dbReference type="PROSITE" id="PS00298">
    <property type="entry name" value="HSP90"/>
    <property type="match status" value="1"/>
</dbReference>
<proteinExistence type="inferred from homology"/>
<comment type="function">
    <text evidence="1">Molecular chaperone. Has ATPase activity.</text>
</comment>
<comment type="subunit">
    <text evidence="1">Homodimer.</text>
</comment>
<comment type="subcellular location">
    <subcellularLocation>
        <location evidence="1">Cytoplasm</location>
    </subcellularLocation>
</comment>
<comment type="similarity">
    <text evidence="1">Belongs to the heat shock protein 90 family.</text>
</comment>
<reference key="1">
    <citation type="submission" date="2007-03" db="EMBL/GenBank/DDBJ databases">
        <authorList>
            <person name="Heidelberg J."/>
        </authorList>
    </citation>
    <scope>NUCLEOTIDE SEQUENCE [LARGE SCALE GENOMIC DNA]</scope>
    <source>
        <strain>ATCC 39541 / Classical Ogawa 395 / O395</strain>
    </source>
</reference>
<reference key="2">
    <citation type="journal article" date="2008" name="PLoS ONE">
        <title>A recalibrated molecular clock and independent origins for the cholera pandemic clones.</title>
        <authorList>
            <person name="Feng L."/>
            <person name="Reeves P.R."/>
            <person name="Lan R."/>
            <person name="Ren Y."/>
            <person name="Gao C."/>
            <person name="Zhou Z."/>
            <person name="Ren Y."/>
            <person name="Cheng J."/>
            <person name="Wang W."/>
            <person name="Wang J."/>
            <person name="Qian W."/>
            <person name="Li D."/>
            <person name="Wang L."/>
        </authorList>
    </citation>
    <scope>NUCLEOTIDE SEQUENCE [LARGE SCALE GENOMIC DNA]</scope>
    <source>
        <strain>ATCC 39541 / Classical Ogawa 395 / O395</strain>
    </source>
</reference>
<gene>
    <name evidence="1" type="primary">htpG</name>
    <name type="ordered locus">VC0395_A0506</name>
    <name type="ordered locus">VC395_1000</name>
</gene>
<evidence type="ECO:0000255" key="1">
    <source>
        <dbReference type="HAMAP-Rule" id="MF_00505"/>
    </source>
</evidence>
<keyword id="KW-0067">ATP-binding</keyword>
<keyword id="KW-0143">Chaperone</keyword>
<keyword id="KW-0963">Cytoplasm</keyword>
<keyword id="KW-0547">Nucleotide-binding</keyword>
<keyword id="KW-0346">Stress response</keyword>
<accession>A5F2T9</accession>
<accession>C3LYZ6</accession>
<protein>
    <recommendedName>
        <fullName evidence="1">Chaperone protein HtpG</fullName>
    </recommendedName>
    <alternativeName>
        <fullName evidence="1">Heat shock protein HtpG</fullName>
    </alternativeName>
    <alternativeName>
        <fullName evidence="1">High temperature protein G</fullName>
    </alternativeName>
</protein>
<organism>
    <name type="scientific">Vibrio cholerae serotype O1 (strain ATCC 39541 / Classical Ogawa 395 / O395)</name>
    <dbReference type="NCBI Taxonomy" id="345073"/>
    <lineage>
        <taxon>Bacteria</taxon>
        <taxon>Pseudomonadati</taxon>
        <taxon>Pseudomonadota</taxon>
        <taxon>Gammaproteobacteria</taxon>
        <taxon>Vibrionales</taxon>
        <taxon>Vibrionaceae</taxon>
        <taxon>Vibrio</taxon>
    </lineage>
</organism>